<keyword id="KW-0002">3D-structure</keyword>
<keyword id="KW-0903">Direct protein sequencing</keyword>
<keyword id="KW-1015">Disulfide bond</keyword>
<keyword id="KW-0325">Glycoprotein</keyword>
<keyword id="KW-1185">Reference proteome</keyword>
<keyword id="KW-0964">Secreted</keyword>
<keyword id="KW-0732">Signal</keyword>
<keyword id="KW-0838">Vasoactive</keyword>
<keyword id="KW-0839">Vasoconstrictor</keyword>
<evidence type="ECO:0000250" key="1">
    <source>
        <dbReference type="UniProtKB" id="P01015"/>
    </source>
</evidence>
<evidence type="ECO:0000250" key="2">
    <source>
        <dbReference type="UniProtKB" id="P01019"/>
    </source>
</evidence>
<evidence type="ECO:0000250" key="3">
    <source>
        <dbReference type="UniProtKB" id="P11859"/>
    </source>
</evidence>
<evidence type="ECO:0000255" key="4"/>
<evidence type="ECO:0000305" key="5"/>
<evidence type="ECO:0000305" key="6">
    <source>
    </source>
</evidence>
<evidence type="ECO:0000312" key="7">
    <source>
        <dbReference type="Proteomes" id="UP000009136"/>
    </source>
</evidence>
<protein>
    <recommendedName>
        <fullName>Angiotensinogen</fullName>
    </recommendedName>
    <alternativeName>
        <fullName>Serpin A8</fullName>
    </alternativeName>
    <component>
        <recommendedName>
            <fullName>Angiotensin-1</fullName>
        </recommendedName>
        <alternativeName>
            <fullName>Angiotensin 1-10</fullName>
        </alternativeName>
        <alternativeName>
            <fullName>Angiotensin I</fullName>
            <shortName>Ang I</shortName>
        </alternativeName>
    </component>
    <component>
        <recommendedName>
            <fullName>Angiotensin-2</fullName>
        </recommendedName>
        <alternativeName>
            <fullName>Angiotensin 1-8</fullName>
        </alternativeName>
        <alternativeName>
            <fullName>Angiotensin II</fullName>
            <shortName>Ang II</shortName>
        </alternativeName>
    </component>
    <component>
        <recommendedName>
            <fullName>Angiotensin-3</fullName>
        </recommendedName>
        <alternativeName>
            <fullName>Angiotensin 2-8</fullName>
        </alternativeName>
        <alternativeName>
            <fullName>Angiotensin III</fullName>
            <shortName>Ang III</shortName>
        </alternativeName>
        <alternativeName>
            <fullName>Des-Asp[1]-angiotensin II</fullName>
        </alternativeName>
    </component>
    <component>
        <recommendedName>
            <fullName>Angiotensin-4</fullName>
        </recommendedName>
        <alternativeName>
            <fullName>Angiotensin 3-8</fullName>
        </alternativeName>
        <alternativeName>
            <fullName>Angiotensin IV</fullName>
            <shortName>Ang IV</shortName>
        </alternativeName>
    </component>
    <component>
        <recommendedName>
            <fullName>Angiotensin 1-9</fullName>
        </recommendedName>
    </component>
    <component>
        <recommendedName>
            <fullName>Angiotensin 1-7</fullName>
        </recommendedName>
    </component>
    <component>
        <recommendedName>
            <fullName>Angiotensin 1-5</fullName>
        </recommendedName>
    </component>
    <component>
        <recommendedName>
            <fullName>Angiotensin 1-4</fullName>
        </recommendedName>
    </component>
</protein>
<gene>
    <name type="primary">AGT</name>
    <name type="synonym">SERPINA8</name>
</gene>
<proteinExistence type="evidence at protein level"/>
<organism>
    <name type="scientific">Bos taurus</name>
    <name type="common">Bovine</name>
    <dbReference type="NCBI Taxonomy" id="9913"/>
    <lineage>
        <taxon>Eukaryota</taxon>
        <taxon>Metazoa</taxon>
        <taxon>Chordata</taxon>
        <taxon>Craniata</taxon>
        <taxon>Vertebrata</taxon>
        <taxon>Euteleostomi</taxon>
        <taxon>Mammalia</taxon>
        <taxon>Eutheria</taxon>
        <taxon>Laurasiatheria</taxon>
        <taxon>Artiodactyla</taxon>
        <taxon>Ruminantia</taxon>
        <taxon>Pecora</taxon>
        <taxon>Bovidae</taxon>
        <taxon>Bovinae</taxon>
        <taxon>Bos</taxon>
    </lineage>
</organism>
<feature type="signal peptide" evidence="4">
    <location>
        <begin position="1"/>
        <end position="24"/>
    </location>
</feature>
<feature type="chain" id="PRO_0000420642" description="Angiotensinogen" evidence="4">
    <location>
        <begin position="25"/>
        <end position="476"/>
    </location>
</feature>
<feature type="peptide" id="PRO_0000032442" description="Angiotensin-1" evidence="2">
    <location>
        <begin position="25"/>
        <end position="34"/>
    </location>
</feature>
<feature type="peptide" id="PRO_0000420638" description="Angiotensin 1-9" evidence="2">
    <location>
        <begin position="25"/>
        <end position="33"/>
    </location>
</feature>
<feature type="peptide" id="PRO_0000032443" description="Angiotensin-2" evidence="2">
    <location>
        <begin position="25"/>
        <end position="32"/>
    </location>
</feature>
<feature type="peptide" id="PRO_0000420639" description="Angiotensin 1-7" evidence="2">
    <location>
        <begin position="25"/>
        <end position="31"/>
    </location>
</feature>
<feature type="peptide" id="PRO_0000420640" description="Angiotensin 1-5" evidence="2">
    <location>
        <begin position="25"/>
        <end position="29"/>
    </location>
</feature>
<feature type="peptide" id="PRO_0000420641" description="Angiotensin 1-4" evidence="2">
    <location>
        <begin position="25"/>
        <end position="28"/>
    </location>
</feature>
<feature type="peptide" id="PRO_0000032444" description="Angiotensin-3" evidence="2">
    <location>
        <begin position="26"/>
        <end position="32"/>
    </location>
</feature>
<feature type="peptide" id="PRO_0000450600" description="Angiotensin-4" evidence="2">
    <location>
        <begin position="27"/>
        <end position="32"/>
    </location>
</feature>
<feature type="glycosylation site" description="N-linked (GlcNAc...) asparagine" evidence="4">
    <location>
        <position position="295"/>
    </location>
</feature>
<feature type="glycosylation site" description="N-linked (GlcNAc...) asparagine" evidence="4">
    <location>
        <position position="319"/>
    </location>
</feature>
<feature type="glycosylation site" description="N-linked (GlcNAc...) asparagine" evidence="4">
    <location>
        <position position="362"/>
    </location>
</feature>
<feature type="glycosylation site" description="N-linked (GlcNAc...) asparagine" evidence="4">
    <location>
        <position position="401"/>
    </location>
</feature>
<feature type="disulfide bond" evidence="2">
    <location>
        <begin position="42"/>
        <end position="161"/>
    </location>
</feature>
<name>ANGT_BOVIN</name>
<comment type="function">
    <text evidence="2">Essential component of the renin-angiotensin system (RAS), a potent regulator of blood pressure, body fluid and electrolyte homeostasis.</text>
</comment>
<comment type="function">
    <molecule>Angiotensin-2</molecule>
    <text evidence="1 2">Acts directly on vascular smooth muscle as a potent vasoconstrictor, affects cardiac contractility and heart rate through its action on the sympathetic nervous system, and alters renal sodium and water absorption through its ability to stimulate the zona glomerulosa cells of the adrenal cortex to synthesize and secrete aldosterone. Acts by binding to angiotensin receptors AGTR1 and AGTR2. Also binds the DEAR/FBXW7-AS1 receptor.</text>
</comment>
<comment type="function">
    <molecule>Angiotensin-3</molecule>
    <text evidence="2">Stimulates aldosterone release.</text>
</comment>
<comment type="function">
    <molecule>Angiotensin 1-7</molecule>
    <text evidence="3">Is a ligand for the G-protein coupled receptor MAS1. Has vasodilator and antidiuretic effects. Has an antithrombotic effect that involves MAS1-mediated release of nitric oxide from platelets.</text>
</comment>
<comment type="subcellular location">
    <subcellularLocation>
        <location evidence="6">Secreted</location>
    </subcellularLocation>
</comment>
<comment type="PTM">
    <text evidence="2">In response to low blood pressure, the enzyme renin/REN cleaves angiotensinogen to produce angiotensin-1. Angiotensin-1 is a substrate of ACE (angiotensin converting enzyme) that removes a dipeptide to yield the physiologically active peptide angiotensin-2. Angiotensin-1 and angiotensin-2 can be further processed to generate angiotensin-3, angiotensin-4. Angiotensin 1-9 is cleaved from angiotensin-1 by ACE2 and can be further processed by ACE to produce angiotensin 1-7, angiotensin 1-5 and angiotensin 1-4. Angiotensin 1-7 has also been proposed to be cleaved from angiotensin-2 by ACE2 or from angiotensin-1 by MME (neprilysin) (By similarity).</text>
</comment>
<comment type="PTM">
    <text evidence="2">The disulfide bond is labile. Angiotensinogen is present in the circulation in a near 40:60 ratio with the oxidized disulfide-bonded form, which preferentially interacts with receptor-bound renin.</text>
</comment>
<comment type="similarity">
    <text evidence="5">Belongs to the serpin family.</text>
</comment>
<sequence length="476" mass="51424">MAPAGLSLGAAILCLLAWAGLAAGDRVYVHPFHLLVYSKSNCDQLEKPSVETPPDPTFTPVPIQTKSSAVDEEALWEQLVRATEKLEAEDRLRASEVGLLLNFMGFHMYKTLSETWSVASGAVFSPVALFSTLTSFYVGALDPTASRLQAFLGVPGEGQGCTSRLDGHKVLSSLQTIQGLLVAQGGASSQARLLLSTVVGLFTAPGLHLKQPFVQSLSSFAPITLPRSLDLSTDPNLAAEKINRFMQSVTGWNMGRALTAVSPDSTLLFNAYVHFQGKMKGFSLLPGLKEFWVDNTTSVSVPMLSGTGIFHFWSDSQNNLSVTRVPLSANTYLLLIQPHHTPDLRKVEALTFQHNFLTRMKNLSPRAIHLTMPQLTLKASYDLQDLLAQAKLPTLLGAEANLSKISDANLRVGKVLNSVLFELKADGEQAPESVPQPAGPEALEVTLNSPFLLAVLERSSGALHFLGRVSRPLSAE</sequence>
<dbReference type="PIR" id="A90345">
    <property type="entry name" value="A90345"/>
</dbReference>
<dbReference type="PDB" id="1GVU">
    <property type="method" value="X-ray"/>
    <property type="resolution" value="0.94 A"/>
    <property type="chains" value="I=30-37"/>
</dbReference>
<dbReference type="PDB" id="3ER5">
    <property type="method" value="X-ray"/>
    <property type="resolution" value="1.80 A"/>
    <property type="chains" value="I=6-9"/>
</dbReference>
<dbReference type="PDBsum" id="1GVU"/>
<dbReference type="PDBsum" id="3ER5"/>
<dbReference type="SMR" id="P01017"/>
<dbReference type="FunCoup" id="P01017">
    <property type="interactions" value="239"/>
</dbReference>
<dbReference type="IntAct" id="P01017">
    <property type="interactions" value="2"/>
</dbReference>
<dbReference type="STRING" id="9913.ENSBTAP00000057860"/>
<dbReference type="MEROPS" id="I04.953"/>
<dbReference type="GlyCosmos" id="P01017">
    <property type="glycosylation" value="4 sites, No reported glycans"/>
</dbReference>
<dbReference type="GlyGen" id="P01017">
    <property type="glycosylation" value="4 sites"/>
</dbReference>
<dbReference type="Ensembl" id="ENSBTAT00000072571.2">
    <property type="protein sequence ID" value="ENSBTAP00000057860.1"/>
    <property type="gene ID" value="ENSBTAG00000012393.7"/>
</dbReference>
<dbReference type="VEuPathDB" id="HostDB:ENSBTAG00000012393"/>
<dbReference type="VGNC" id="VGNC:103718">
    <property type="gene designation" value="AGT"/>
</dbReference>
<dbReference type="GeneTree" id="ENSGT00890000139531"/>
<dbReference type="InParanoid" id="P01017"/>
<dbReference type="OMA" id="FVPMMTV"/>
<dbReference type="OrthoDB" id="7817921at2759"/>
<dbReference type="Reactome" id="R-BTA-2022377">
    <property type="pathway name" value="Metabolism of Angiotensinogen to Angiotensins"/>
</dbReference>
<dbReference type="Reactome" id="R-BTA-375276">
    <property type="pathway name" value="Peptide ligand-binding receptors"/>
</dbReference>
<dbReference type="Reactome" id="R-BTA-416476">
    <property type="pathway name" value="G alpha (q) signalling events"/>
</dbReference>
<dbReference type="Reactome" id="R-BTA-418594">
    <property type="pathway name" value="G alpha (i) signalling events"/>
</dbReference>
<dbReference type="EvolutionaryTrace" id="P01017"/>
<dbReference type="Proteomes" id="UP000009136">
    <property type="component" value="Chromosome 28"/>
</dbReference>
<dbReference type="Bgee" id="ENSBTAG00000012393">
    <property type="expression patterns" value="Expressed in prefrontal cortex and 83 other cell types or tissues"/>
</dbReference>
<dbReference type="GO" id="GO:0005615">
    <property type="term" value="C:extracellular space"/>
    <property type="evidence" value="ECO:0000318"/>
    <property type="project" value="GO_Central"/>
</dbReference>
<dbReference type="GO" id="GO:0004867">
    <property type="term" value="F:serine-type endopeptidase inhibitor activity"/>
    <property type="evidence" value="ECO:0000318"/>
    <property type="project" value="GO_Central"/>
</dbReference>
<dbReference type="GO" id="GO:0007340">
    <property type="term" value="P:acrosome reaction"/>
    <property type="evidence" value="ECO:0000315"/>
    <property type="project" value="UniProtKB"/>
</dbReference>
<dbReference type="GO" id="GO:0017156">
    <property type="term" value="P:calcium-ion regulated exocytosis"/>
    <property type="evidence" value="ECO:0000314"/>
    <property type="project" value="UniProtKB"/>
</dbReference>
<dbReference type="GO" id="GO:0010718">
    <property type="term" value="P:positive regulation of epithelial to mesenchymal transition"/>
    <property type="evidence" value="ECO:0000250"/>
    <property type="project" value="UniProtKB"/>
</dbReference>
<dbReference type="GO" id="GO:0042981">
    <property type="term" value="P:regulation of apoptotic process"/>
    <property type="evidence" value="ECO:0000318"/>
    <property type="project" value="GO_Central"/>
</dbReference>
<dbReference type="GO" id="GO:0003081">
    <property type="term" value="P:regulation of systemic arterial blood pressure by renin-angiotensin"/>
    <property type="evidence" value="ECO:0007669"/>
    <property type="project" value="InterPro"/>
</dbReference>
<dbReference type="GO" id="GO:1990776">
    <property type="term" value="P:response to angiotensin"/>
    <property type="evidence" value="ECO:0000318"/>
    <property type="project" value="GO_Central"/>
</dbReference>
<dbReference type="GO" id="GO:0042310">
    <property type="term" value="P:vasoconstriction"/>
    <property type="evidence" value="ECO:0007669"/>
    <property type="project" value="UniProtKB-KW"/>
</dbReference>
<dbReference type="Gene3D" id="2.30.39.10">
    <property type="entry name" value="Alpha-1-antitrypsin, domain 1"/>
    <property type="match status" value="1"/>
</dbReference>
<dbReference type="Gene3D" id="3.30.497.10">
    <property type="entry name" value="Antithrombin, subunit I, domain 2"/>
    <property type="match status" value="1"/>
</dbReference>
<dbReference type="InterPro" id="IPR000227">
    <property type="entry name" value="Angiotensinogen"/>
</dbReference>
<dbReference type="InterPro" id="IPR023795">
    <property type="entry name" value="Serpin_CS"/>
</dbReference>
<dbReference type="InterPro" id="IPR023796">
    <property type="entry name" value="Serpin_dom"/>
</dbReference>
<dbReference type="InterPro" id="IPR000215">
    <property type="entry name" value="Serpin_fam"/>
</dbReference>
<dbReference type="InterPro" id="IPR036186">
    <property type="entry name" value="Serpin_sf"/>
</dbReference>
<dbReference type="InterPro" id="IPR042178">
    <property type="entry name" value="Serpin_sf_1"/>
</dbReference>
<dbReference type="InterPro" id="IPR042185">
    <property type="entry name" value="Serpin_sf_2"/>
</dbReference>
<dbReference type="PANTHER" id="PTHR11461:SF13">
    <property type="entry name" value="ANGIOTENSINOGEN"/>
    <property type="match status" value="1"/>
</dbReference>
<dbReference type="PANTHER" id="PTHR11461">
    <property type="entry name" value="SERINE PROTEASE INHIBITOR, SERPIN"/>
    <property type="match status" value="1"/>
</dbReference>
<dbReference type="Pfam" id="PF00079">
    <property type="entry name" value="Serpin"/>
    <property type="match status" value="1"/>
</dbReference>
<dbReference type="PRINTS" id="PR00654">
    <property type="entry name" value="ANGIOTENSNGN"/>
</dbReference>
<dbReference type="SMART" id="SM00093">
    <property type="entry name" value="SERPIN"/>
    <property type="match status" value="1"/>
</dbReference>
<dbReference type="SUPFAM" id="SSF56574">
    <property type="entry name" value="Serpins"/>
    <property type="match status" value="1"/>
</dbReference>
<dbReference type="PROSITE" id="PS00284">
    <property type="entry name" value="SERPIN"/>
    <property type="match status" value="1"/>
</dbReference>
<accession>P01017</accession>
<accession>A0A3Q1LGY9</accession>
<reference evidence="7" key="1">
    <citation type="submission" date="2018-03" db="EMBL/GenBank/DDBJ databases">
        <title>ARS-UCD1.2.</title>
        <authorList>
            <person name="Rosen B.D."/>
            <person name="Bickhart D.M."/>
            <person name="Koren S."/>
            <person name="Schnabel R.D."/>
            <person name="Hall R."/>
            <person name="Zimin A."/>
            <person name="Dreischer C."/>
            <person name="Schultheiss S."/>
            <person name="Schroeder S.G."/>
            <person name="Elsik C.G."/>
            <person name="Couldrey C."/>
            <person name="Liu G.E."/>
            <person name="Van Tassell C.P."/>
            <person name="Phillippy A.M."/>
            <person name="Smith T.P.L."/>
            <person name="Medrano J.F."/>
        </authorList>
    </citation>
    <scope>NUCLEOTIDE SEQUENCE [LARGE SCALE GENOMIC DNA]</scope>
    <source>
        <strain evidence="7">Hereford</strain>
    </source>
</reference>
<reference key="2">
    <citation type="journal article" date="1957" name="Biochem. J.">
        <title>The amino acid sequence in a hypertensin.</title>
        <authorList>
            <person name="Elliott D.F."/>
            <person name="Peart W.S."/>
        </authorList>
    </citation>
    <scope>PROTEIN SEQUENCE OF 25-34</scope>
</reference>